<comment type="function">
    <text evidence="1">Catalyzes the reversible isomerization-deamination of glucosamine 6-phosphate (GlcN6P) to form fructose 6-phosphate (Fru6P) and ammonium ion.</text>
</comment>
<comment type="catalytic activity">
    <reaction evidence="1">
        <text>alpha-D-glucosamine 6-phosphate + H2O = beta-D-fructose 6-phosphate + NH4(+)</text>
        <dbReference type="Rhea" id="RHEA:12172"/>
        <dbReference type="ChEBI" id="CHEBI:15377"/>
        <dbReference type="ChEBI" id="CHEBI:28938"/>
        <dbReference type="ChEBI" id="CHEBI:57634"/>
        <dbReference type="ChEBI" id="CHEBI:75989"/>
        <dbReference type="EC" id="3.5.99.6"/>
    </reaction>
</comment>
<comment type="pathway">
    <text evidence="1">Amino-sugar metabolism; N-acetylneuraminate degradation; D-fructose 6-phosphate from N-acetylneuraminate: step 5/5.</text>
</comment>
<comment type="similarity">
    <text evidence="1">Belongs to the glucosamine/galactosamine-6-phosphate isomerase family. NagB subfamily.</text>
</comment>
<protein>
    <recommendedName>
        <fullName evidence="1">Glucosamine-6-phosphate deaminase</fullName>
        <ecNumber evidence="1">3.5.99.6</ecNumber>
    </recommendedName>
    <alternativeName>
        <fullName evidence="1">GlcN6P deaminase</fullName>
        <shortName evidence="1">GNPDA</shortName>
    </alternativeName>
    <alternativeName>
        <fullName evidence="1">Glucosamine-6-phosphate isomerase</fullName>
    </alternativeName>
</protein>
<evidence type="ECO:0000255" key="1">
    <source>
        <dbReference type="HAMAP-Rule" id="MF_01241"/>
    </source>
</evidence>
<feature type="chain" id="PRO_0000160152" description="Glucosamine-6-phosphate deaminase">
    <location>
        <begin position="1"/>
        <end position="234"/>
    </location>
</feature>
<feature type="active site" description="Proton acceptor; for enolization step" evidence="1">
    <location>
        <position position="63"/>
    </location>
</feature>
<feature type="active site" description="For ring-opening step" evidence="1">
    <location>
        <position position="129"/>
    </location>
</feature>
<feature type="active site" description="Proton acceptor; for ring-opening step" evidence="1">
    <location>
        <position position="131"/>
    </location>
</feature>
<feature type="active site" description="For ring-opening step" evidence="1">
    <location>
        <position position="136"/>
    </location>
</feature>
<organism>
    <name type="scientific">Listeria innocua serovar 6a (strain ATCC BAA-680 / CLIP 11262)</name>
    <dbReference type="NCBI Taxonomy" id="272626"/>
    <lineage>
        <taxon>Bacteria</taxon>
        <taxon>Bacillati</taxon>
        <taxon>Bacillota</taxon>
        <taxon>Bacilli</taxon>
        <taxon>Bacillales</taxon>
        <taxon>Listeriaceae</taxon>
        <taxon>Listeria</taxon>
    </lineage>
</organism>
<gene>
    <name evidence="1" type="primary">nagB</name>
    <name type="ordered locus">lin0956</name>
</gene>
<proteinExistence type="inferred from homology"/>
<dbReference type="EC" id="3.5.99.6" evidence="1"/>
<dbReference type="EMBL" id="AL596167">
    <property type="protein sequence ID" value="CAC96187.1"/>
    <property type="molecule type" value="Genomic_DNA"/>
</dbReference>
<dbReference type="PIR" id="AC1552">
    <property type="entry name" value="AC1552"/>
</dbReference>
<dbReference type="RefSeq" id="WP_003761431.1">
    <property type="nucleotide sequence ID" value="NC_003212.1"/>
</dbReference>
<dbReference type="SMR" id="Q92D64"/>
<dbReference type="STRING" id="272626.gene:17565286"/>
<dbReference type="KEGG" id="lin:lin0956"/>
<dbReference type="eggNOG" id="COG0363">
    <property type="taxonomic scope" value="Bacteria"/>
</dbReference>
<dbReference type="HOGENOM" id="CLU_049611_1_0_9"/>
<dbReference type="OrthoDB" id="9791139at2"/>
<dbReference type="UniPathway" id="UPA00629">
    <property type="reaction ID" value="UER00684"/>
</dbReference>
<dbReference type="Proteomes" id="UP000002513">
    <property type="component" value="Chromosome"/>
</dbReference>
<dbReference type="GO" id="GO:0005737">
    <property type="term" value="C:cytoplasm"/>
    <property type="evidence" value="ECO:0007669"/>
    <property type="project" value="TreeGrafter"/>
</dbReference>
<dbReference type="GO" id="GO:0004342">
    <property type="term" value="F:glucosamine-6-phosphate deaminase activity"/>
    <property type="evidence" value="ECO:0007669"/>
    <property type="project" value="UniProtKB-UniRule"/>
</dbReference>
<dbReference type="GO" id="GO:0042802">
    <property type="term" value="F:identical protein binding"/>
    <property type="evidence" value="ECO:0007669"/>
    <property type="project" value="TreeGrafter"/>
</dbReference>
<dbReference type="GO" id="GO:0005975">
    <property type="term" value="P:carbohydrate metabolic process"/>
    <property type="evidence" value="ECO:0007669"/>
    <property type="project" value="InterPro"/>
</dbReference>
<dbReference type="GO" id="GO:0006043">
    <property type="term" value="P:glucosamine catabolic process"/>
    <property type="evidence" value="ECO:0007669"/>
    <property type="project" value="TreeGrafter"/>
</dbReference>
<dbReference type="GO" id="GO:0006046">
    <property type="term" value="P:N-acetylglucosamine catabolic process"/>
    <property type="evidence" value="ECO:0007669"/>
    <property type="project" value="TreeGrafter"/>
</dbReference>
<dbReference type="GO" id="GO:0019262">
    <property type="term" value="P:N-acetylneuraminate catabolic process"/>
    <property type="evidence" value="ECO:0007669"/>
    <property type="project" value="UniProtKB-UniRule"/>
</dbReference>
<dbReference type="CDD" id="cd01399">
    <property type="entry name" value="GlcN6P_deaminase"/>
    <property type="match status" value="1"/>
</dbReference>
<dbReference type="FunFam" id="3.40.50.1360:FF:000003">
    <property type="entry name" value="Glucosamine-6-phosphate deaminase"/>
    <property type="match status" value="1"/>
</dbReference>
<dbReference type="Gene3D" id="3.40.50.1360">
    <property type="match status" value="1"/>
</dbReference>
<dbReference type="HAMAP" id="MF_01241">
    <property type="entry name" value="GlcN6P_deamin"/>
    <property type="match status" value="1"/>
</dbReference>
<dbReference type="InterPro" id="IPR006148">
    <property type="entry name" value="Glc/Gal-6P_isomerase"/>
</dbReference>
<dbReference type="InterPro" id="IPR004547">
    <property type="entry name" value="Glucosamine6P_isomerase"/>
</dbReference>
<dbReference type="InterPro" id="IPR018321">
    <property type="entry name" value="Glucosamine6P_isomerase_CS"/>
</dbReference>
<dbReference type="InterPro" id="IPR037171">
    <property type="entry name" value="NagB/RpiA_transferase-like"/>
</dbReference>
<dbReference type="NCBIfam" id="TIGR00502">
    <property type="entry name" value="nagB"/>
    <property type="match status" value="1"/>
</dbReference>
<dbReference type="PANTHER" id="PTHR11280">
    <property type="entry name" value="GLUCOSAMINE-6-PHOSPHATE ISOMERASE"/>
    <property type="match status" value="1"/>
</dbReference>
<dbReference type="PANTHER" id="PTHR11280:SF5">
    <property type="entry name" value="GLUCOSAMINE-6-PHOSPHATE ISOMERASE"/>
    <property type="match status" value="1"/>
</dbReference>
<dbReference type="Pfam" id="PF01182">
    <property type="entry name" value="Glucosamine_iso"/>
    <property type="match status" value="1"/>
</dbReference>
<dbReference type="SUPFAM" id="SSF100950">
    <property type="entry name" value="NagB/RpiA/CoA transferase-like"/>
    <property type="match status" value="1"/>
</dbReference>
<dbReference type="PROSITE" id="PS01161">
    <property type="entry name" value="GLC_GALNAC_ISOMERASE"/>
    <property type="match status" value="1"/>
</dbReference>
<reference key="1">
    <citation type="journal article" date="2001" name="Science">
        <title>Comparative genomics of Listeria species.</title>
        <authorList>
            <person name="Glaser P."/>
            <person name="Frangeul L."/>
            <person name="Buchrieser C."/>
            <person name="Rusniok C."/>
            <person name="Amend A."/>
            <person name="Baquero F."/>
            <person name="Berche P."/>
            <person name="Bloecker H."/>
            <person name="Brandt P."/>
            <person name="Chakraborty T."/>
            <person name="Charbit A."/>
            <person name="Chetouani F."/>
            <person name="Couve E."/>
            <person name="de Daruvar A."/>
            <person name="Dehoux P."/>
            <person name="Domann E."/>
            <person name="Dominguez-Bernal G."/>
            <person name="Duchaud E."/>
            <person name="Durant L."/>
            <person name="Dussurget O."/>
            <person name="Entian K.-D."/>
            <person name="Fsihi H."/>
            <person name="Garcia-del Portillo F."/>
            <person name="Garrido P."/>
            <person name="Gautier L."/>
            <person name="Goebel W."/>
            <person name="Gomez-Lopez N."/>
            <person name="Hain T."/>
            <person name="Hauf J."/>
            <person name="Jackson D."/>
            <person name="Jones L.-M."/>
            <person name="Kaerst U."/>
            <person name="Kreft J."/>
            <person name="Kuhn M."/>
            <person name="Kunst F."/>
            <person name="Kurapkat G."/>
            <person name="Madueno E."/>
            <person name="Maitournam A."/>
            <person name="Mata Vicente J."/>
            <person name="Ng E."/>
            <person name="Nedjari H."/>
            <person name="Nordsiek G."/>
            <person name="Novella S."/>
            <person name="de Pablos B."/>
            <person name="Perez-Diaz J.-C."/>
            <person name="Purcell R."/>
            <person name="Remmel B."/>
            <person name="Rose M."/>
            <person name="Schlueter T."/>
            <person name="Simoes N."/>
            <person name="Tierrez A."/>
            <person name="Vazquez-Boland J.-A."/>
            <person name="Voss H."/>
            <person name="Wehland J."/>
            <person name="Cossart P."/>
        </authorList>
    </citation>
    <scope>NUCLEOTIDE SEQUENCE [LARGE SCALE GENOMIC DNA]</scope>
    <source>
        <strain>ATCC BAA-680 / CLIP 11262</strain>
    </source>
</reference>
<accession>Q92D64</accession>
<keyword id="KW-0119">Carbohydrate metabolism</keyword>
<keyword id="KW-0378">Hydrolase</keyword>
<sequence length="234" mass="25467">MQLITTENKLAGSKKALEIIEKGITSGEVNTLGLATGSTPETLYAELVKSDVDTKNVTTTNLDEYVGLAADDPNSYHYYMNDLLFSKKAFKESFLPNGEATDAEAECARYEGILSEHPIDIQVLGIGTNGHIGFNEPGTSFDSLTHKVVLTDSTREANKRFFEREEDVPTHAYSMGIKSIMNAKKIILLAFGENKAQAIKETIKGPVDVNCPASVLQNHPDVTVILDNEAASLL</sequence>
<name>NAGB_LISIN</name>